<reference key="1">
    <citation type="journal article" date="2005" name="Genome Res.">
        <title>Living with two extremes: conclusions from the genome sequence of Natronomonas pharaonis.</title>
        <authorList>
            <person name="Falb M."/>
            <person name="Pfeiffer F."/>
            <person name="Palm P."/>
            <person name="Rodewald K."/>
            <person name="Hickmann V."/>
            <person name="Tittor J."/>
            <person name="Oesterhelt D."/>
        </authorList>
    </citation>
    <scope>NUCLEOTIDE SEQUENCE [LARGE SCALE GENOMIC DNA]</scope>
    <source>
        <strain>ATCC 35678 / DSM 2160 / CIP 103997 / JCM 8858 / NBRC 14720 / NCIMB 2260 / Gabara</strain>
    </source>
</reference>
<proteinExistence type="inferred from homology"/>
<gene>
    <name type="ordered locus">NP_1320A</name>
</gene>
<keyword id="KW-0238">DNA-binding</keyword>
<keyword id="KW-1185">Reference proteome</keyword>
<keyword id="KW-0804">Transcription</keyword>
<keyword id="KW-0805">Transcription regulation</keyword>
<accession>Q3ISY4</accession>
<evidence type="ECO:0000255" key="1">
    <source>
        <dbReference type="HAMAP-Rule" id="MF_00584"/>
    </source>
</evidence>
<name>Y1320_NATPD</name>
<dbReference type="EMBL" id="CR936257">
    <property type="protein sequence ID" value="CAI48751.1"/>
    <property type="molecule type" value="Genomic_DNA"/>
</dbReference>
<dbReference type="RefSeq" id="WP_011322386.1">
    <property type="nucleotide sequence ID" value="NC_007426.1"/>
</dbReference>
<dbReference type="SMR" id="Q3ISY4"/>
<dbReference type="STRING" id="348780.NP_1320A"/>
<dbReference type="EnsemblBacteria" id="CAI48751">
    <property type="protein sequence ID" value="CAI48751"/>
    <property type="gene ID" value="NP_1320A"/>
</dbReference>
<dbReference type="GeneID" id="3701114"/>
<dbReference type="KEGG" id="nph:NP_1320A"/>
<dbReference type="eggNOG" id="arCOG04152">
    <property type="taxonomic scope" value="Archaea"/>
</dbReference>
<dbReference type="HOGENOM" id="CLU_075726_0_0_2"/>
<dbReference type="OrthoDB" id="31424at2157"/>
<dbReference type="Proteomes" id="UP000002698">
    <property type="component" value="Chromosome"/>
</dbReference>
<dbReference type="GO" id="GO:0003677">
    <property type="term" value="F:DNA binding"/>
    <property type="evidence" value="ECO:0007669"/>
    <property type="project" value="UniProtKB-KW"/>
</dbReference>
<dbReference type="GO" id="GO:0003700">
    <property type="term" value="F:DNA-binding transcription factor activity"/>
    <property type="evidence" value="ECO:0007669"/>
    <property type="project" value="UniProtKB-UniRule"/>
</dbReference>
<dbReference type="CDD" id="cd00093">
    <property type="entry name" value="HTH_XRE"/>
    <property type="match status" value="1"/>
</dbReference>
<dbReference type="Gene3D" id="1.10.260.40">
    <property type="entry name" value="lambda repressor-like DNA-binding domains"/>
    <property type="match status" value="1"/>
</dbReference>
<dbReference type="HAMAP" id="MF_00584">
    <property type="entry name" value="HTH_type_cro_C1"/>
    <property type="match status" value="1"/>
</dbReference>
<dbReference type="InterPro" id="IPR020886">
    <property type="entry name" value="Arc_TR_HTH"/>
</dbReference>
<dbReference type="InterPro" id="IPR001387">
    <property type="entry name" value="Cro/C1-type_HTH"/>
</dbReference>
<dbReference type="InterPro" id="IPR010982">
    <property type="entry name" value="Lambda_DNA-bd_dom_sf"/>
</dbReference>
<dbReference type="NCBIfam" id="NF003162">
    <property type="entry name" value="PRK04140.1"/>
    <property type="match status" value="1"/>
</dbReference>
<dbReference type="Pfam" id="PF01381">
    <property type="entry name" value="HTH_3"/>
    <property type="match status" value="1"/>
</dbReference>
<dbReference type="SMART" id="SM00530">
    <property type="entry name" value="HTH_XRE"/>
    <property type="match status" value="1"/>
</dbReference>
<dbReference type="SUPFAM" id="SSF47413">
    <property type="entry name" value="lambda repressor-like DNA-binding domains"/>
    <property type="match status" value="1"/>
</dbReference>
<dbReference type="PROSITE" id="PS50943">
    <property type="entry name" value="HTH_CROC1"/>
    <property type="match status" value="1"/>
</dbReference>
<feature type="chain" id="PRO_0000259362" description="Putative HTH-type transcriptional regulatory protein NP_1320A">
    <location>
        <begin position="1"/>
        <end position="317"/>
    </location>
</feature>
<feature type="domain" description="HTH cro/C1-type" evidence="1">
    <location>
        <begin position="132"/>
        <end position="189"/>
    </location>
</feature>
<feature type="DNA-binding region" description="H-T-H motif" evidence="1">
    <location>
        <begin position="143"/>
        <end position="162"/>
    </location>
</feature>
<sequence length="317" mass="35135">MSRSALVGNITAMLEDAGFTVSDRCAIRPKSFDIAARRGDDVLLLKVLANIDAFDGYTGTEMRRLGEYLDATPLVIGLRTRDEELKPGVVYFRHGVPVFSPDTAMDLFIEEVPPLIYAAPGGLYVNIDGDLLSDIRSQEDMSLGKLANELGVSRRTVSKYEDGMSASVEVAAELEEIFDRKLASPVEVLSGAEEVRDDVDEPEAPEADPDDAEIVTVLTRVGFEVHPTMQAPFKAVSEDEKRERKVLTGHSEFNRTAEKRARIMSSVGHVTRTRSVYVVDSTKRDSVDGTALIEREEFERIHDSDELENLIRERAEG</sequence>
<organism>
    <name type="scientific">Natronomonas pharaonis (strain ATCC 35678 / DSM 2160 / CIP 103997 / JCM 8858 / NBRC 14720 / NCIMB 2260 / Gabara)</name>
    <name type="common">Halobacterium pharaonis</name>
    <dbReference type="NCBI Taxonomy" id="348780"/>
    <lineage>
        <taxon>Archaea</taxon>
        <taxon>Methanobacteriati</taxon>
        <taxon>Methanobacteriota</taxon>
        <taxon>Stenosarchaea group</taxon>
        <taxon>Halobacteria</taxon>
        <taxon>Halobacteriales</taxon>
        <taxon>Haloarculaceae</taxon>
        <taxon>Natronomonas</taxon>
    </lineage>
</organism>
<protein>
    <recommendedName>
        <fullName evidence="1">Putative HTH-type transcriptional regulatory protein NP_1320A</fullName>
    </recommendedName>
</protein>